<gene>
    <name evidence="4 7" type="primary">trm141</name>
    <name evidence="7" type="ORF">SPBC3H7.11</name>
</gene>
<dbReference type="EC" id="2.1.1.-" evidence="6"/>
<dbReference type="EMBL" id="CU329671">
    <property type="protein sequence ID" value="CAA20307.1"/>
    <property type="molecule type" value="Genomic_DNA"/>
</dbReference>
<dbReference type="PIR" id="T40404">
    <property type="entry name" value="T40404"/>
</dbReference>
<dbReference type="RefSeq" id="NP_595764.1">
    <property type="nucleotide sequence ID" value="NM_001021665.2"/>
</dbReference>
<dbReference type="SMR" id="O74386"/>
<dbReference type="BioGRID" id="277547">
    <property type="interactions" value="8"/>
</dbReference>
<dbReference type="FunCoup" id="O74386">
    <property type="interactions" value="213"/>
</dbReference>
<dbReference type="STRING" id="284812.O74386"/>
<dbReference type="iPTMnet" id="O74386"/>
<dbReference type="PaxDb" id="4896-SPBC3H7.11.1"/>
<dbReference type="EnsemblFungi" id="SPBC3H7.11.1">
    <property type="protein sequence ID" value="SPBC3H7.11.1:pep"/>
    <property type="gene ID" value="SPBC3H7.11"/>
</dbReference>
<dbReference type="GeneID" id="2541032"/>
<dbReference type="KEGG" id="spo:2541032"/>
<dbReference type="PomBase" id="SPBC3H7.11">
    <property type="gene designation" value="trm141"/>
</dbReference>
<dbReference type="VEuPathDB" id="FungiDB:SPBC3H7.11"/>
<dbReference type="eggNOG" id="KOG2361">
    <property type="taxonomic scope" value="Eukaryota"/>
</dbReference>
<dbReference type="HOGENOM" id="CLU_029724_2_0_1"/>
<dbReference type="InParanoid" id="O74386"/>
<dbReference type="OMA" id="DAQRNWD"/>
<dbReference type="PhylomeDB" id="O74386"/>
<dbReference type="PRO" id="PR:O74386"/>
<dbReference type="Proteomes" id="UP000002485">
    <property type="component" value="Chromosome II"/>
</dbReference>
<dbReference type="GO" id="GO:0005829">
    <property type="term" value="C:cytosol"/>
    <property type="evidence" value="ECO:0007005"/>
    <property type="project" value="PomBase"/>
</dbReference>
<dbReference type="GO" id="GO:0005634">
    <property type="term" value="C:nucleus"/>
    <property type="evidence" value="ECO:0007005"/>
    <property type="project" value="PomBase"/>
</dbReference>
<dbReference type="GO" id="GO:0052735">
    <property type="term" value="F:tRNA (cytidine-3-)-methyltransferase activity"/>
    <property type="evidence" value="ECO:0000315"/>
    <property type="project" value="UniProtKB"/>
</dbReference>
<dbReference type="GO" id="GO:0106217">
    <property type="term" value="P:tRNA C3-cytosine methylation"/>
    <property type="evidence" value="ECO:0000315"/>
    <property type="project" value="UniProtKB"/>
</dbReference>
<dbReference type="CDD" id="cd02440">
    <property type="entry name" value="AdoMet_MTases"/>
    <property type="match status" value="1"/>
</dbReference>
<dbReference type="FunFam" id="3.40.50.150:FF:000279">
    <property type="entry name" value="Methyltransferase-like protein"/>
    <property type="match status" value="1"/>
</dbReference>
<dbReference type="Gene3D" id="3.40.50.150">
    <property type="entry name" value="Vaccinia Virus protein VP39"/>
    <property type="match status" value="1"/>
</dbReference>
<dbReference type="InterPro" id="IPR013217">
    <property type="entry name" value="Methyltransf_12"/>
</dbReference>
<dbReference type="InterPro" id="IPR026113">
    <property type="entry name" value="METTL2/6/8-like"/>
</dbReference>
<dbReference type="InterPro" id="IPR029063">
    <property type="entry name" value="SAM-dependent_MTases_sf"/>
</dbReference>
<dbReference type="PANTHER" id="PTHR22809">
    <property type="entry name" value="METHYLTRANSFERASE-RELATED"/>
    <property type="match status" value="1"/>
</dbReference>
<dbReference type="PANTHER" id="PTHR22809:SF5">
    <property type="entry name" value="TRNA N(3)-METHYLCYTIDINE METHYLTRANSFERASE METTL6"/>
    <property type="match status" value="1"/>
</dbReference>
<dbReference type="Pfam" id="PF08242">
    <property type="entry name" value="Methyltransf_12"/>
    <property type="match status" value="1"/>
</dbReference>
<dbReference type="PIRSF" id="PIRSF037755">
    <property type="entry name" value="Mettl2_prd"/>
    <property type="match status" value="1"/>
</dbReference>
<dbReference type="SUPFAM" id="SSF53335">
    <property type="entry name" value="S-adenosyl-L-methionine-dependent methyltransferases"/>
    <property type="match status" value="1"/>
</dbReference>
<keyword id="KW-0963">Cytoplasm</keyword>
<keyword id="KW-0489">Methyltransferase</keyword>
<keyword id="KW-0539">Nucleus</keyword>
<keyword id="KW-1185">Reference proteome</keyword>
<keyword id="KW-0808">Transferase</keyword>
<keyword id="KW-0819">tRNA processing</keyword>
<reference key="1">
    <citation type="journal article" date="2002" name="Nature">
        <title>The genome sequence of Schizosaccharomyces pombe.</title>
        <authorList>
            <person name="Wood V."/>
            <person name="Gwilliam R."/>
            <person name="Rajandream M.A."/>
            <person name="Lyne M.H."/>
            <person name="Lyne R."/>
            <person name="Stewart A."/>
            <person name="Sgouros J.G."/>
            <person name="Peat N."/>
            <person name="Hayles J."/>
            <person name="Baker S.G."/>
            <person name="Basham D."/>
            <person name="Bowman S."/>
            <person name="Brooks K."/>
            <person name="Brown D."/>
            <person name="Brown S."/>
            <person name="Chillingworth T."/>
            <person name="Churcher C.M."/>
            <person name="Collins M."/>
            <person name="Connor R."/>
            <person name="Cronin A."/>
            <person name="Davis P."/>
            <person name="Feltwell T."/>
            <person name="Fraser A."/>
            <person name="Gentles S."/>
            <person name="Goble A."/>
            <person name="Hamlin N."/>
            <person name="Harris D.E."/>
            <person name="Hidalgo J."/>
            <person name="Hodgson G."/>
            <person name="Holroyd S."/>
            <person name="Hornsby T."/>
            <person name="Howarth S."/>
            <person name="Huckle E.J."/>
            <person name="Hunt S."/>
            <person name="Jagels K."/>
            <person name="James K.D."/>
            <person name="Jones L."/>
            <person name="Jones M."/>
            <person name="Leather S."/>
            <person name="McDonald S."/>
            <person name="McLean J."/>
            <person name="Mooney P."/>
            <person name="Moule S."/>
            <person name="Mungall K.L."/>
            <person name="Murphy L.D."/>
            <person name="Niblett D."/>
            <person name="Odell C."/>
            <person name="Oliver K."/>
            <person name="O'Neil S."/>
            <person name="Pearson D."/>
            <person name="Quail M.A."/>
            <person name="Rabbinowitsch E."/>
            <person name="Rutherford K.M."/>
            <person name="Rutter S."/>
            <person name="Saunders D."/>
            <person name="Seeger K."/>
            <person name="Sharp S."/>
            <person name="Skelton J."/>
            <person name="Simmonds M.N."/>
            <person name="Squares R."/>
            <person name="Squares S."/>
            <person name="Stevens K."/>
            <person name="Taylor K."/>
            <person name="Taylor R.G."/>
            <person name="Tivey A."/>
            <person name="Walsh S.V."/>
            <person name="Warren T."/>
            <person name="Whitehead S."/>
            <person name="Woodward J.R."/>
            <person name="Volckaert G."/>
            <person name="Aert R."/>
            <person name="Robben J."/>
            <person name="Grymonprez B."/>
            <person name="Weltjens I."/>
            <person name="Vanstreels E."/>
            <person name="Rieger M."/>
            <person name="Schaefer M."/>
            <person name="Mueller-Auer S."/>
            <person name="Gabel C."/>
            <person name="Fuchs M."/>
            <person name="Duesterhoeft A."/>
            <person name="Fritzc C."/>
            <person name="Holzer E."/>
            <person name="Moestl D."/>
            <person name="Hilbert H."/>
            <person name="Borzym K."/>
            <person name="Langer I."/>
            <person name="Beck A."/>
            <person name="Lehrach H."/>
            <person name="Reinhardt R."/>
            <person name="Pohl T.M."/>
            <person name="Eger P."/>
            <person name="Zimmermann W."/>
            <person name="Wedler H."/>
            <person name="Wambutt R."/>
            <person name="Purnelle B."/>
            <person name="Goffeau A."/>
            <person name="Cadieu E."/>
            <person name="Dreano S."/>
            <person name="Gloux S."/>
            <person name="Lelaure V."/>
            <person name="Mottier S."/>
            <person name="Galibert F."/>
            <person name="Aves S.J."/>
            <person name="Xiang Z."/>
            <person name="Hunt C."/>
            <person name="Moore K."/>
            <person name="Hurst S.M."/>
            <person name="Lucas M."/>
            <person name="Rochet M."/>
            <person name="Gaillardin C."/>
            <person name="Tallada V.A."/>
            <person name="Garzon A."/>
            <person name="Thode G."/>
            <person name="Daga R.R."/>
            <person name="Cruzado L."/>
            <person name="Jimenez J."/>
            <person name="Sanchez M."/>
            <person name="del Rey F."/>
            <person name="Benito J."/>
            <person name="Dominguez A."/>
            <person name="Revuelta J.L."/>
            <person name="Moreno S."/>
            <person name="Armstrong J."/>
            <person name="Forsburg S.L."/>
            <person name="Cerutti L."/>
            <person name="Lowe T."/>
            <person name="McCombie W.R."/>
            <person name="Paulsen I."/>
            <person name="Potashkin J."/>
            <person name="Shpakovski G.V."/>
            <person name="Ussery D."/>
            <person name="Barrell B.G."/>
            <person name="Nurse P."/>
        </authorList>
    </citation>
    <scope>NUCLEOTIDE SEQUENCE [LARGE SCALE GENOMIC DNA]</scope>
    <source>
        <strain>972 / ATCC 24843</strain>
    </source>
</reference>
<reference key="2">
    <citation type="journal article" date="2006" name="Nat. Biotechnol.">
        <title>ORFeome cloning and global analysis of protein localization in the fission yeast Schizosaccharomyces pombe.</title>
        <authorList>
            <person name="Matsuyama A."/>
            <person name="Arai R."/>
            <person name="Yashiroda Y."/>
            <person name="Shirai A."/>
            <person name="Kamata A."/>
            <person name="Sekido S."/>
            <person name="Kobayashi Y."/>
            <person name="Hashimoto A."/>
            <person name="Hamamoto M."/>
            <person name="Hiraoka Y."/>
            <person name="Horinouchi S."/>
            <person name="Yoshida M."/>
        </authorList>
    </citation>
    <scope>SUBCELLULAR LOCATION [LARGE SCALE ANALYSIS]</scope>
</reference>
<reference key="3">
    <citation type="journal article" date="2016" name="RNA">
        <title>Evolving specificity of tRNA 3-methyl-cytidine-32 (m3C32) modification: a subset of tRNAsSer requires N6-isopentenylation of A37.</title>
        <authorList>
            <person name="Arimbasseri A.G."/>
            <person name="Iben J."/>
            <person name="Wei F.Y."/>
            <person name="Rijal K."/>
            <person name="Tomizawa K."/>
            <person name="Hafner M."/>
            <person name="Maraia R.J."/>
        </authorList>
    </citation>
    <scope>FUNCTION</scope>
    <scope>CATALYTIC ACTIVITY</scope>
    <scope>DISRUPTION PHENOTYPE</scope>
</reference>
<comment type="function">
    <text evidence="3">S-adenosyl-L-methionine-dependent methyltransferase that mediates N(3)-methylcytidine modification of residue 32 of the tRNA anticodon loop of tRNA(Ser) (PubMed:27354703). N(3)-methylcytidine methylation by trm141 requires the formation of N(6)-dimethylallyladenosine(37) (i6A37) by tit1 as prerequisite (PubMed:27354703). Does not catalyze N(3)-methylcytidine modification of tRNA(Thr) (PubMed:27354703).</text>
</comment>
<comment type="catalytic activity">
    <reaction evidence="6">
        <text>cytidine(32) in tRNA(Ser) + S-adenosyl-L-methionine = N(3)-methylcytidine(32) in tRNA(Ser) + S-adenosyl-L-homocysteine + H(+)</text>
        <dbReference type="Rhea" id="RHEA:50956"/>
        <dbReference type="Rhea" id="RHEA-COMP:12849"/>
        <dbReference type="Rhea" id="RHEA-COMP:12851"/>
        <dbReference type="ChEBI" id="CHEBI:15378"/>
        <dbReference type="ChEBI" id="CHEBI:57856"/>
        <dbReference type="ChEBI" id="CHEBI:59789"/>
        <dbReference type="ChEBI" id="CHEBI:74894"/>
        <dbReference type="ChEBI" id="CHEBI:82748"/>
    </reaction>
    <physiologicalReaction direction="left-to-right" evidence="3">
        <dbReference type="Rhea" id="RHEA:50957"/>
    </physiologicalReaction>
</comment>
<comment type="subcellular location">
    <subcellularLocation>
        <location evidence="2">Cytoplasm</location>
    </subcellularLocation>
    <subcellularLocation>
        <location evidence="2">Nucleus</location>
    </subcellularLocation>
</comment>
<comment type="disruption phenotype">
    <text evidence="3">Cells lacking trm141 show abolished N(3)-methylcytidine modification in tRNA(Ser) (PubMed:27354703). Cells lacking trm140 and trm141 show abolished N(3)-methylcytidine modification in tRNAs (tRNA(Ser) and tRNA(Thr)) (PubMed:27354703).</text>
</comment>
<comment type="similarity">
    <text evidence="5">Belongs to the methyltransferase superfamily. METL family.</text>
</comment>
<evidence type="ECO:0000250" key="1">
    <source>
        <dbReference type="UniProtKB" id="Q8TCB7"/>
    </source>
</evidence>
<evidence type="ECO:0000269" key="2">
    <source>
    </source>
</evidence>
<evidence type="ECO:0000269" key="3">
    <source>
    </source>
</evidence>
<evidence type="ECO:0000303" key="4">
    <source>
    </source>
</evidence>
<evidence type="ECO:0000305" key="5"/>
<evidence type="ECO:0000305" key="6">
    <source>
    </source>
</evidence>
<evidence type="ECO:0000312" key="7">
    <source>
        <dbReference type="PomBase" id="SPBC3H7.11"/>
    </source>
</evidence>
<feature type="chain" id="PRO_0000339157" description="tRNA N(3)-methylcytidine methyltransferase trm141">
    <location>
        <begin position="1"/>
        <end position="248"/>
    </location>
</feature>
<feature type="binding site" evidence="1">
    <location>
        <position position="23"/>
    </location>
    <ligand>
        <name>S-adenosyl-L-methionine</name>
        <dbReference type="ChEBI" id="CHEBI:59789"/>
    </ligand>
</feature>
<feature type="binding site" evidence="1">
    <location>
        <position position="27"/>
    </location>
    <ligand>
        <name>S-adenosyl-L-methionine</name>
        <dbReference type="ChEBI" id="CHEBI:59789"/>
    </ligand>
</feature>
<feature type="binding site" evidence="1">
    <location>
        <position position="63"/>
    </location>
    <ligand>
        <name>S-adenosyl-L-methionine</name>
        <dbReference type="ChEBI" id="CHEBI:59789"/>
    </ligand>
</feature>
<feature type="binding site" evidence="1">
    <location>
        <position position="86"/>
    </location>
    <ligand>
        <name>S-adenosyl-L-methionine</name>
        <dbReference type="ChEBI" id="CHEBI:59789"/>
    </ligand>
</feature>
<feature type="binding site" evidence="1">
    <location>
        <position position="112"/>
    </location>
    <ligand>
        <name>S-adenosyl-L-methionine</name>
        <dbReference type="ChEBI" id="CHEBI:59789"/>
    </ligand>
</feature>
<feature type="binding site" evidence="1">
    <location>
        <position position="133"/>
    </location>
    <ligand>
        <name>S-adenosyl-L-methionine</name>
        <dbReference type="ChEBI" id="CHEBI:59789"/>
    </ligand>
</feature>
<accession>O74386</accession>
<organism>
    <name type="scientific">Schizosaccharomyces pombe (strain 972 / ATCC 24843)</name>
    <name type="common">Fission yeast</name>
    <dbReference type="NCBI Taxonomy" id="284812"/>
    <lineage>
        <taxon>Eukaryota</taxon>
        <taxon>Fungi</taxon>
        <taxon>Dikarya</taxon>
        <taxon>Ascomycota</taxon>
        <taxon>Taphrinomycotina</taxon>
        <taxon>Schizosaccharomycetes</taxon>
        <taxon>Schizosaccharomycetales</taxon>
        <taxon>Schizosaccharomycetaceae</taxon>
        <taxon>Schizosaccharomyces</taxon>
    </lineage>
</organism>
<protein>
    <recommendedName>
        <fullName evidence="5">tRNA N(3)-methylcytidine methyltransferase trm141</fullName>
        <ecNumber evidence="6">2.1.1.-</ecNumber>
    </recommendedName>
</protein>
<proteinExistence type="evidence at protein level"/>
<name>TR141_SCHPO</name>
<sequence length="248" mass="28877">MSGISKLSDFWVEKYKKESKKSWDKFYKRNETRFFKDRHWLDREFDCYFGLPDKLPLTILEVGCGVGNLVYPLLEVQPNLKIYCCDFSPRAIDFVKKHSCYNENRVFPFVNDITEDSLLEVLGSACIDTLTAIFVLSAIPREKQLRSIKNLASVIKPGGHLVFRDYCDGDFAQEKFMTSGDPSMIDEQTFVRQDGTLSLFFREEDIAEWMKSAGFGLVTLDRVNRTVDNRKRNLNMKRTFLQGVWKKL</sequence>